<comment type="function">
    <text evidence="1">Major role in the synthesis of nucleoside triphosphates other than ATP. The ATP gamma phosphate is transferred to the NDP beta phosphate via a ping-pong mechanism, using a phosphorylated active-site intermediate.</text>
</comment>
<comment type="catalytic activity">
    <reaction evidence="1">
        <text>a 2'-deoxyribonucleoside 5'-diphosphate + ATP = a 2'-deoxyribonucleoside 5'-triphosphate + ADP</text>
        <dbReference type="Rhea" id="RHEA:44640"/>
        <dbReference type="ChEBI" id="CHEBI:30616"/>
        <dbReference type="ChEBI" id="CHEBI:61560"/>
        <dbReference type="ChEBI" id="CHEBI:73316"/>
        <dbReference type="ChEBI" id="CHEBI:456216"/>
        <dbReference type="EC" id="2.7.4.6"/>
    </reaction>
</comment>
<comment type="catalytic activity">
    <reaction evidence="1">
        <text>a ribonucleoside 5'-diphosphate + ATP = a ribonucleoside 5'-triphosphate + ADP</text>
        <dbReference type="Rhea" id="RHEA:18113"/>
        <dbReference type="ChEBI" id="CHEBI:30616"/>
        <dbReference type="ChEBI" id="CHEBI:57930"/>
        <dbReference type="ChEBI" id="CHEBI:61557"/>
        <dbReference type="ChEBI" id="CHEBI:456216"/>
        <dbReference type="EC" id="2.7.4.6"/>
    </reaction>
</comment>
<comment type="cofactor">
    <cofactor evidence="1">
        <name>Mg(2+)</name>
        <dbReference type="ChEBI" id="CHEBI:18420"/>
    </cofactor>
</comment>
<comment type="subunit">
    <text evidence="1">Homotetramer.</text>
</comment>
<comment type="subcellular location">
    <subcellularLocation>
        <location evidence="1">Cytoplasm</location>
    </subcellularLocation>
</comment>
<comment type="similarity">
    <text evidence="1">Belongs to the NDK family.</text>
</comment>
<protein>
    <recommendedName>
        <fullName evidence="1">Nucleoside diphosphate kinase</fullName>
        <shortName evidence="1">NDK</shortName>
        <shortName evidence="1">NDP kinase</shortName>
        <ecNumber evidence="1">2.7.4.6</ecNumber>
    </recommendedName>
    <alternativeName>
        <fullName evidence="1">Nucleoside-2-P kinase</fullName>
    </alternativeName>
</protein>
<dbReference type="EC" id="2.7.4.6" evidence="1"/>
<dbReference type="EMBL" id="AM181176">
    <property type="protein sequence ID" value="CAY52052.1"/>
    <property type="molecule type" value="Genomic_DNA"/>
</dbReference>
<dbReference type="RefSeq" id="WP_003175956.1">
    <property type="nucleotide sequence ID" value="NC_012660.1"/>
</dbReference>
<dbReference type="SMR" id="C3K1L8"/>
<dbReference type="STRING" id="294.SRM1_04649"/>
<dbReference type="GeneID" id="93512756"/>
<dbReference type="eggNOG" id="COG0105">
    <property type="taxonomic scope" value="Bacteria"/>
</dbReference>
<dbReference type="HOGENOM" id="CLU_060216_8_1_6"/>
<dbReference type="OrthoDB" id="9801161at2"/>
<dbReference type="GO" id="GO:0005737">
    <property type="term" value="C:cytoplasm"/>
    <property type="evidence" value="ECO:0007669"/>
    <property type="project" value="UniProtKB-SubCell"/>
</dbReference>
<dbReference type="GO" id="GO:0005524">
    <property type="term" value="F:ATP binding"/>
    <property type="evidence" value="ECO:0007669"/>
    <property type="project" value="UniProtKB-UniRule"/>
</dbReference>
<dbReference type="GO" id="GO:0046872">
    <property type="term" value="F:metal ion binding"/>
    <property type="evidence" value="ECO:0007669"/>
    <property type="project" value="UniProtKB-KW"/>
</dbReference>
<dbReference type="GO" id="GO:0004550">
    <property type="term" value="F:nucleoside diphosphate kinase activity"/>
    <property type="evidence" value="ECO:0007669"/>
    <property type="project" value="UniProtKB-UniRule"/>
</dbReference>
<dbReference type="GO" id="GO:0006241">
    <property type="term" value="P:CTP biosynthetic process"/>
    <property type="evidence" value="ECO:0007669"/>
    <property type="project" value="UniProtKB-UniRule"/>
</dbReference>
<dbReference type="GO" id="GO:0006183">
    <property type="term" value="P:GTP biosynthetic process"/>
    <property type="evidence" value="ECO:0007669"/>
    <property type="project" value="UniProtKB-UniRule"/>
</dbReference>
<dbReference type="GO" id="GO:0006228">
    <property type="term" value="P:UTP biosynthetic process"/>
    <property type="evidence" value="ECO:0007669"/>
    <property type="project" value="UniProtKB-UniRule"/>
</dbReference>
<dbReference type="CDD" id="cd04413">
    <property type="entry name" value="NDPk_I"/>
    <property type="match status" value="1"/>
</dbReference>
<dbReference type="FunFam" id="3.30.70.141:FF:000001">
    <property type="entry name" value="Nucleoside diphosphate kinase"/>
    <property type="match status" value="1"/>
</dbReference>
<dbReference type="Gene3D" id="3.30.70.141">
    <property type="entry name" value="Nucleoside diphosphate kinase-like domain"/>
    <property type="match status" value="1"/>
</dbReference>
<dbReference type="HAMAP" id="MF_00451">
    <property type="entry name" value="NDP_kinase"/>
    <property type="match status" value="1"/>
</dbReference>
<dbReference type="InterPro" id="IPR034907">
    <property type="entry name" value="NDK-like_dom"/>
</dbReference>
<dbReference type="InterPro" id="IPR036850">
    <property type="entry name" value="NDK-like_dom_sf"/>
</dbReference>
<dbReference type="InterPro" id="IPR001564">
    <property type="entry name" value="Nucleoside_diP_kinase"/>
</dbReference>
<dbReference type="InterPro" id="IPR023005">
    <property type="entry name" value="Nucleoside_diP_kinase_AS"/>
</dbReference>
<dbReference type="NCBIfam" id="NF001908">
    <property type="entry name" value="PRK00668.1"/>
    <property type="match status" value="1"/>
</dbReference>
<dbReference type="PANTHER" id="PTHR46161">
    <property type="entry name" value="NUCLEOSIDE DIPHOSPHATE KINASE"/>
    <property type="match status" value="1"/>
</dbReference>
<dbReference type="PANTHER" id="PTHR46161:SF3">
    <property type="entry name" value="NUCLEOSIDE DIPHOSPHATE KINASE DDB_G0292928-RELATED"/>
    <property type="match status" value="1"/>
</dbReference>
<dbReference type="Pfam" id="PF00334">
    <property type="entry name" value="NDK"/>
    <property type="match status" value="1"/>
</dbReference>
<dbReference type="PRINTS" id="PR01243">
    <property type="entry name" value="NUCDPKINASE"/>
</dbReference>
<dbReference type="SMART" id="SM00562">
    <property type="entry name" value="NDK"/>
    <property type="match status" value="1"/>
</dbReference>
<dbReference type="SUPFAM" id="SSF54919">
    <property type="entry name" value="Nucleoside diphosphate kinase, NDK"/>
    <property type="match status" value="1"/>
</dbReference>
<dbReference type="PROSITE" id="PS00469">
    <property type="entry name" value="NDPK"/>
    <property type="match status" value="1"/>
</dbReference>
<dbReference type="PROSITE" id="PS51374">
    <property type="entry name" value="NDPK_LIKE"/>
    <property type="match status" value="1"/>
</dbReference>
<feature type="chain" id="PRO_1000206218" description="Nucleoside diphosphate kinase">
    <location>
        <begin position="1"/>
        <end position="141"/>
    </location>
</feature>
<feature type="active site" description="Pros-phosphohistidine intermediate" evidence="1">
    <location>
        <position position="117"/>
    </location>
</feature>
<feature type="binding site" evidence="1">
    <location>
        <position position="11"/>
    </location>
    <ligand>
        <name>ATP</name>
        <dbReference type="ChEBI" id="CHEBI:30616"/>
    </ligand>
</feature>
<feature type="binding site" evidence="1">
    <location>
        <position position="59"/>
    </location>
    <ligand>
        <name>ATP</name>
        <dbReference type="ChEBI" id="CHEBI:30616"/>
    </ligand>
</feature>
<feature type="binding site" evidence="1">
    <location>
        <position position="87"/>
    </location>
    <ligand>
        <name>ATP</name>
        <dbReference type="ChEBI" id="CHEBI:30616"/>
    </ligand>
</feature>
<feature type="binding site" evidence="1">
    <location>
        <position position="93"/>
    </location>
    <ligand>
        <name>ATP</name>
        <dbReference type="ChEBI" id="CHEBI:30616"/>
    </ligand>
</feature>
<feature type="binding site" evidence="1">
    <location>
        <position position="104"/>
    </location>
    <ligand>
        <name>ATP</name>
        <dbReference type="ChEBI" id="CHEBI:30616"/>
    </ligand>
</feature>
<feature type="binding site" evidence="1">
    <location>
        <position position="114"/>
    </location>
    <ligand>
        <name>ATP</name>
        <dbReference type="ChEBI" id="CHEBI:30616"/>
    </ligand>
</feature>
<gene>
    <name evidence="1" type="primary">ndk</name>
    <name type="ordered locus">PFLU_5061</name>
</gene>
<organism>
    <name type="scientific">Pseudomonas fluorescens (strain SBW25)</name>
    <dbReference type="NCBI Taxonomy" id="216595"/>
    <lineage>
        <taxon>Bacteria</taxon>
        <taxon>Pseudomonadati</taxon>
        <taxon>Pseudomonadota</taxon>
        <taxon>Gammaproteobacteria</taxon>
        <taxon>Pseudomonadales</taxon>
        <taxon>Pseudomonadaceae</taxon>
        <taxon>Pseudomonas</taxon>
    </lineage>
</organism>
<sequence length="141" mass="14937">MAVQRTFSIIKPDAVAKNVIGEITTRFEKAGLKVVASKLKQLSKAEAEGFYAEHSARGFFGDLVAFMISGPVVVQVLEGENAIALNRELMGATNPKEAAAGTIRADFAESIDANAVHGSDSEAAAAREISYFFAATEVTAR</sequence>
<evidence type="ECO:0000255" key="1">
    <source>
        <dbReference type="HAMAP-Rule" id="MF_00451"/>
    </source>
</evidence>
<accession>C3K1L8</accession>
<reference key="1">
    <citation type="journal article" date="2009" name="Genome Biol.">
        <title>Genomic and genetic analyses of diversity and plant interactions of Pseudomonas fluorescens.</title>
        <authorList>
            <person name="Silby M.W."/>
            <person name="Cerdeno-Tarraga A.M."/>
            <person name="Vernikos G.S."/>
            <person name="Giddens S.R."/>
            <person name="Jackson R.W."/>
            <person name="Preston G.M."/>
            <person name="Zhang X.-X."/>
            <person name="Moon C.D."/>
            <person name="Gehrig S.M."/>
            <person name="Godfrey S.A.C."/>
            <person name="Knight C.G."/>
            <person name="Malone J.G."/>
            <person name="Robinson Z."/>
            <person name="Spiers A.J."/>
            <person name="Harris S."/>
            <person name="Challis G.L."/>
            <person name="Yaxley A.M."/>
            <person name="Harris D."/>
            <person name="Seeger K."/>
            <person name="Murphy L."/>
            <person name="Rutter S."/>
            <person name="Squares R."/>
            <person name="Quail M.A."/>
            <person name="Saunders E."/>
            <person name="Mavromatis K."/>
            <person name="Brettin T.S."/>
            <person name="Bentley S.D."/>
            <person name="Hothersall J."/>
            <person name="Stephens E."/>
            <person name="Thomas C.M."/>
            <person name="Parkhill J."/>
            <person name="Levy S.B."/>
            <person name="Rainey P.B."/>
            <person name="Thomson N.R."/>
        </authorList>
    </citation>
    <scope>NUCLEOTIDE SEQUENCE [LARGE SCALE GENOMIC DNA]</scope>
    <source>
        <strain>SBW25</strain>
    </source>
</reference>
<keyword id="KW-0067">ATP-binding</keyword>
<keyword id="KW-0963">Cytoplasm</keyword>
<keyword id="KW-0418">Kinase</keyword>
<keyword id="KW-0460">Magnesium</keyword>
<keyword id="KW-0479">Metal-binding</keyword>
<keyword id="KW-0546">Nucleotide metabolism</keyword>
<keyword id="KW-0547">Nucleotide-binding</keyword>
<keyword id="KW-0597">Phosphoprotein</keyword>
<keyword id="KW-0808">Transferase</keyword>
<proteinExistence type="inferred from homology"/>
<name>NDK_PSEFS</name>